<evidence type="ECO:0000255" key="1">
    <source>
        <dbReference type="HAMAP-Rule" id="MF_00146"/>
    </source>
</evidence>
<keyword id="KW-0378">Hydrolase</keyword>
<keyword id="KW-0546">Nucleotide metabolism</keyword>
<keyword id="KW-0547">Nucleotide-binding</keyword>
<comment type="function">
    <text evidence="1">Catalyzes the deamination of dCTP to dUTP.</text>
</comment>
<comment type="catalytic activity">
    <reaction evidence="1">
        <text>dCTP + H2O + H(+) = dUTP + NH4(+)</text>
        <dbReference type="Rhea" id="RHEA:22680"/>
        <dbReference type="ChEBI" id="CHEBI:15377"/>
        <dbReference type="ChEBI" id="CHEBI:15378"/>
        <dbReference type="ChEBI" id="CHEBI:28938"/>
        <dbReference type="ChEBI" id="CHEBI:61481"/>
        <dbReference type="ChEBI" id="CHEBI:61555"/>
        <dbReference type="EC" id="3.5.4.13"/>
    </reaction>
</comment>
<comment type="pathway">
    <text evidence="1">Pyrimidine metabolism; dUMP biosynthesis; dUMP from dCTP (dUTP route): step 1/2.</text>
</comment>
<comment type="subunit">
    <text evidence="1">Homotrimer.</text>
</comment>
<comment type="similarity">
    <text evidence="1">Belongs to the dCTP deaminase family.</text>
</comment>
<feature type="chain" id="PRO_1000009694" description="dCTP deaminase">
    <location>
        <begin position="1"/>
        <end position="189"/>
    </location>
</feature>
<feature type="active site" description="Proton donor/acceptor" evidence="1">
    <location>
        <position position="138"/>
    </location>
</feature>
<feature type="binding site" evidence="1">
    <location>
        <begin position="112"/>
        <end position="117"/>
    </location>
    <ligand>
        <name>dCTP</name>
        <dbReference type="ChEBI" id="CHEBI:61481"/>
    </ligand>
</feature>
<feature type="binding site" evidence="1">
    <location>
        <begin position="136"/>
        <end position="138"/>
    </location>
    <ligand>
        <name>dCTP</name>
        <dbReference type="ChEBI" id="CHEBI:61481"/>
    </ligand>
</feature>
<feature type="binding site" evidence="1">
    <location>
        <position position="157"/>
    </location>
    <ligand>
        <name>dCTP</name>
        <dbReference type="ChEBI" id="CHEBI:61481"/>
    </ligand>
</feature>
<feature type="binding site" evidence="1">
    <location>
        <position position="171"/>
    </location>
    <ligand>
        <name>dCTP</name>
        <dbReference type="ChEBI" id="CHEBI:61481"/>
    </ligand>
</feature>
<feature type="binding site" evidence="1">
    <location>
        <position position="181"/>
    </location>
    <ligand>
        <name>dCTP</name>
        <dbReference type="ChEBI" id="CHEBI:61481"/>
    </ligand>
</feature>
<protein>
    <recommendedName>
        <fullName evidence="1">dCTP deaminase</fullName>
        <ecNumber evidence="1">3.5.4.13</ecNumber>
    </recommendedName>
    <alternativeName>
        <fullName evidence="1">Deoxycytidine triphosphate deaminase</fullName>
    </alternativeName>
</protein>
<proteinExistence type="inferred from homology"/>
<gene>
    <name evidence="1" type="primary">dcd</name>
    <name type="ordered locus">Bcep18194_A5764</name>
</gene>
<reference key="1">
    <citation type="submission" date="2005-10" db="EMBL/GenBank/DDBJ databases">
        <title>Complete sequence of chromosome 1 of Burkholderia sp. 383.</title>
        <authorList>
            <consortium name="US DOE Joint Genome Institute"/>
            <person name="Copeland A."/>
            <person name="Lucas S."/>
            <person name="Lapidus A."/>
            <person name="Barry K."/>
            <person name="Detter J.C."/>
            <person name="Glavina T."/>
            <person name="Hammon N."/>
            <person name="Israni S."/>
            <person name="Pitluck S."/>
            <person name="Chain P."/>
            <person name="Malfatti S."/>
            <person name="Shin M."/>
            <person name="Vergez L."/>
            <person name="Schmutz J."/>
            <person name="Larimer F."/>
            <person name="Land M."/>
            <person name="Kyrpides N."/>
            <person name="Lykidis A."/>
            <person name="Richardson P."/>
        </authorList>
    </citation>
    <scope>NUCLEOTIDE SEQUENCE [LARGE SCALE GENOMIC DNA]</scope>
    <source>
        <strain>ATCC 17760 / DSM 23089 / LMG 22485 / NCIMB 9086 / R18194 / 383</strain>
    </source>
</reference>
<sequence>MSIKSDKWIRRMAEEHKMIEPFVPDQVRASEDGRRIVSYGTSSYGYDIRCADEFKIFTNINSTIVDPKNFDEGSFVDFKGDVCIIPPNSFALARTVEYFRIPRTVLTVCLGKSTYARCGIIVNVTPFEPEWEGYVTLEFSNTTPLPAKIYANEGVAQVLFFESDEVCDVSYADRGGKYQGQRGVTLPKT</sequence>
<dbReference type="EC" id="3.5.4.13" evidence="1"/>
<dbReference type="EMBL" id="CP000151">
    <property type="protein sequence ID" value="ABB09358.1"/>
    <property type="molecule type" value="Genomic_DNA"/>
</dbReference>
<dbReference type="RefSeq" id="WP_006398615.1">
    <property type="nucleotide sequence ID" value="NZ_WNDV01000008.1"/>
</dbReference>
<dbReference type="SMR" id="Q39DV8"/>
<dbReference type="GeneID" id="98107731"/>
<dbReference type="KEGG" id="bur:Bcep18194_A5764"/>
<dbReference type="HOGENOM" id="CLU_087476_4_0_4"/>
<dbReference type="UniPathway" id="UPA00610">
    <property type="reaction ID" value="UER00665"/>
</dbReference>
<dbReference type="Proteomes" id="UP000002705">
    <property type="component" value="Chromosome 1"/>
</dbReference>
<dbReference type="GO" id="GO:0008829">
    <property type="term" value="F:dCTP deaminase activity"/>
    <property type="evidence" value="ECO:0007669"/>
    <property type="project" value="UniProtKB-UniRule"/>
</dbReference>
<dbReference type="GO" id="GO:0000166">
    <property type="term" value="F:nucleotide binding"/>
    <property type="evidence" value="ECO:0007669"/>
    <property type="project" value="UniProtKB-KW"/>
</dbReference>
<dbReference type="GO" id="GO:0006226">
    <property type="term" value="P:dUMP biosynthetic process"/>
    <property type="evidence" value="ECO:0007669"/>
    <property type="project" value="UniProtKB-UniPathway"/>
</dbReference>
<dbReference type="GO" id="GO:0006229">
    <property type="term" value="P:dUTP biosynthetic process"/>
    <property type="evidence" value="ECO:0007669"/>
    <property type="project" value="UniProtKB-UniRule"/>
</dbReference>
<dbReference type="GO" id="GO:0015949">
    <property type="term" value="P:nucleobase-containing small molecule interconversion"/>
    <property type="evidence" value="ECO:0007669"/>
    <property type="project" value="TreeGrafter"/>
</dbReference>
<dbReference type="CDD" id="cd07557">
    <property type="entry name" value="trimeric_dUTPase"/>
    <property type="match status" value="1"/>
</dbReference>
<dbReference type="FunFam" id="2.70.40.10:FF:000001">
    <property type="entry name" value="dCTP deaminase"/>
    <property type="match status" value="1"/>
</dbReference>
<dbReference type="Gene3D" id="2.70.40.10">
    <property type="match status" value="1"/>
</dbReference>
<dbReference type="HAMAP" id="MF_00146">
    <property type="entry name" value="dCTP_deaminase"/>
    <property type="match status" value="1"/>
</dbReference>
<dbReference type="InterPro" id="IPR011962">
    <property type="entry name" value="dCTP_deaminase"/>
</dbReference>
<dbReference type="InterPro" id="IPR036157">
    <property type="entry name" value="dUTPase-like_sf"/>
</dbReference>
<dbReference type="InterPro" id="IPR033704">
    <property type="entry name" value="dUTPase_trimeric"/>
</dbReference>
<dbReference type="NCBIfam" id="TIGR02274">
    <property type="entry name" value="dCTP_deam"/>
    <property type="match status" value="1"/>
</dbReference>
<dbReference type="PANTHER" id="PTHR42680">
    <property type="entry name" value="DCTP DEAMINASE"/>
    <property type="match status" value="1"/>
</dbReference>
<dbReference type="PANTHER" id="PTHR42680:SF3">
    <property type="entry name" value="DCTP DEAMINASE"/>
    <property type="match status" value="1"/>
</dbReference>
<dbReference type="Pfam" id="PF22769">
    <property type="entry name" value="DCD"/>
    <property type="match status" value="1"/>
</dbReference>
<dbReference type="SUPFAM" id="SSF51283">
    <property type="entry name" value="dUTPase-like"/>
    <property type="match status" value="1"/>
</dbReference>
<organism>
    <name type="scientific">Burkholderia lata (strain ATCC 17760 / DSM 23089 / LMG 22485 / NCIMB 9086 / R18194 / 383)</name>
    <dbReference type="NCBI Taxonomy" id="482957"/>
    <lineage>
        <taxon>Bacteria</taxon>
        <taxon>Pseudomonadati</taxon>
        <taxon>Pseudomonadota</taxon>
        <taxon>Betaproteobacteria</taxon>
        <taxon>Burkholderiales</taxon>
        <taxon>Burkholderiaceae</taxon>
        <taxon>Burkholderia</taxon>
        <taxon>Burkholderia cepacia complex</taxon>
    </lineage>
</organism>
<name>DCD_BURL3</name>
<accession>Q39DV8</accession>